<feature type="chain" id="PRO_0000131578" description="Small ribosomal subunit protein uS5">
    <location>
        <begin position="1"/>
        <end position="187"/>
    </location>
</feature>
<feature type="domain" description="S5 DRBM" evidence="1">
    <location>
        <begin position="21"/>
        <end position="84"/>
    </location>
</feature>
<sequence>MAQERREGGRGREREERDDGMVDKLVHINRVAKVVKGGRRFGFAALVVVGDQKGRVGFGHGKAREVPEAIRKATESAKRDMIFVPLRSGRTLHHDVEGRWGAGRVLLRAAKQGTGIIAGGPMRAVFETLGMHDVVAKSMGSSNPYNMVRATFDALKSQMHPKDVAAARGIKYSTLQARRGTAVAAEE</sequence>
<name>RS5_RHILO</name>
<reference key="1">
    <citation type="journal article" date="2000" name="DNA Res.">
        <title>Complete genome structure of the nitrogen-fixing symbiotic bacterium Mesorhizobium loti.</title>
        <authorList>
            <person name="Kaneko T."/>
            <person name="Nakamura Y."/>
            <person name="Sato S."/>
            <person name="Asamizu E."/>
            <person name="Kato T."/>
            <person name="Sasamoto S."/>
            <person name="Watanabe A."/>
            <person name="Idesawa K."/>
            <person name="Ishikawa A."/>
            <person name="Kawashima K."/>
            <person name="Kimura T."/>
            <person name="Kishida Y."/>
            <person name="Kiyokawa C."/>
            <person name="Kohara M."/>
            <person name="Matsumoto M."/>
            <person name="Matsuno A."/>
            <person name="Mochizuki Y."/>
            <person name="Nakayama S."/>
            <person name="Nakazaki N."/>
            <person name="Shimpo S."/>
            <person name="Sugimoto M."/>
            <person name="Takeuchi C."/>
            <person name="Yamada M."/>
            <person name="Tabata S."/>
        </authorList>
    </citation>
    <scope>NUCLEOTIDE SEQUENCE [LARGE SCALE GENOMIC DNA]</scope>
    <source>
        <strain>LMG 29417 / CECT 9101 / MAFF 303099</strain>
    </source>
</reference>
<keyword id="KW-0687">Ribonucleoprotein</keyword>
<keyword id="KW-0689">Ribosomal protein</keyword>
<keyword id="KW-0694">RNA-binding</keyword>
<keyword id="KW-0699">rRNA-binding</keyword>
<evidence type="ECO:0000255" key="1">
    <source>
        <dbReference type="HAMAP-Rule" id="MF_01307"/>
    </source>
</evidence>
<evidence type="ECO:0000305" key="2"/>
<comment type="function">
    <text evidence="1">With S4 and S12 plays an important role in translational accuracy.</text>
</comment>
<comment type="function">
    <text evidence="1">Located at the back of the 30S subunit body where it stabilizes the conformation of the head with respect to the body.</text>
</comment>
<comment type="subunit">
    <text evidence="1">Part of the 30S ribosomal subunit. Contacts proteins S4 and S8.</text>
</comment>
<comment type="domain">
    <text>The N-terminal domain interacts with the head of the 30S subunit; the C-terminal domain interacts with the body and contacts protein S4. The interaction surface between S4 and S5 is involved in control of translational fidelity.</text>
</comment>
<comment type="similarity">
    <text evidence="1">Belongs to the universal ribosomal protein uS5 family.</text>
</comment>
<comment type="sequence caution" evidence="2">
    <conflict type="erroneous initiation">
        <sequence resource="EMBL-CDS" id="BAB47923"/>
    </conflict>
</comment>
<proteinExistence type="inferred from homology"/>
<accession>Q98N40</accession>
<protein>
    <recommendedName>
        <fullName evidence="1">Small ribosomal subunit protein uS5</fullName>
    </recommendedName>
    <alternativeName>
        <fullName evidence="2">30S ribosomal protein S5</fullName>
    </alternativeName>
</protein>
<organism>
    <name type="scientific">Mesorhizobium japonicum (strain LMG 29417 / CECT 9101 / MAFF 303099)</name>
    <name type="common">Mesorhizobium loti (strain MAFF 303099)</name>
    <dbReference type="NCBI Taxonomy" id="266835"/>
    <lineage>
        <taxon>Bacteria</taxon>
        <taxon>Pseudomonadati</taxon>
        <taxon>Pseudomonadota</taxon>
        <taxon>Alphaproteobacteria</taxon>
        <taxon>Hyphomicrobiales</taxon>
        <taxon>Phyllobacteriaceae</taxon>
        <taxon>Mesorhizobium</taxon>
    </lineage>
</organism>
<gene>
    <name evidence="1" type="primary">rpsE</name>
    <name type="ordered locus">mlr0315</name>
</gene>
<dbReference type="EMBL" id="BA000012">
    <property type="protein sequence ID" value="BAB47923.1"/>
    <property type="status" value="ALT_INIT"/>
    <property type="molecule type" value="Genomic_DNA"/>
</dbReference>
<dbReference type="RefSeq" id="WP_032933400.1">
    <property type="nucleotide sequence ID" value="NC_002678.2"/>
</dbReference>
<dbReference type="SMR" id="Q98N40"/>
<dbReference type="GeneID" id="66684199"/>
<dbReference type="KEGG" id="mlo:mlr0315"/>
<dbReference type="eggNOG" id="COG0098">
    <property type="taxonomic scope" value="Bacteria"/>
</dbReference>
<dbReference type="HOGENOM" id="CLU_065898_2_2_5"/>
<dbReference type="Proteomes" id="UP000000552">
    <property type="component" value="Chromosome"/>
</dbReference>
<dbReference type="GO" id="GO:0015935">
    <property type="term" value="C:small ribosomal subunit"/>
    <property type="evidence" value="ECO:0007669"/>
    <property type="project" value="InterPro"/>
</dbReference>
<dbReference type="GO" id="GO:0019843">
    <property type="term" value="F:rRNA binding"/>
    <property type="evidence" value="ECO:0007669"/>
    <property type="project" value="UniProtKB-UniRule"/>
</dbReference>
<dbReference type="GO" id="GO:0003735">
    <property type="term" value="F:structural constituent of ribosome"/>
    <property type="evidence" value="ECO:0007669"/>
    <property type="project" value="InterPro"/>
</dbReference>
<dbReference type="GO" id="GO:0006412">
    <property type="term" value="P:translation"/>
    <property type="evidence" value="ECO:0007669"/>
    <property type="project" value="UniProtKB-UniRule"/>
</dbReference>
<dbReference type="FunFam" id="3.30.160.20:FF:000001">
    <property type="entry name" value="30S ribosomal protein S5"/>
    <property type="match status" value="1"/>
</dbReference>
<dbReference type="FunFam" id="3.30.230.10:FF:000002">
    <property type="entry name" value="30S ribosomal protein S5"/>
    <property type="match status" value="1"/>
</dbReference>
<dbReference type="Gene3D" id="3.30.160.20">
    <property type="match status" value="1"/>
</dbReference>
<dbReference type="Gene3D" id="3.30.230.10">
    <property type="match status" value="1"/>
</dbReference>
<dbReference type="HAMAP" id="MF_01307_B">
    <property type="entry name" value="Ribosomal_uS5_B"/>
    <property type="match status" value="1"/>
</dbReference>
<dbReference type="InterPro" id="IPR020568">
    <property type="entry name" value="Ribosomal_Su5_D2-typ_SF"/>
</dbReference>
<dbReference type="InterPro" id="IPR000851">
    <property type="entry name" value="Ribosomal_uS5"/>
</dbReference>
<dbReference type="InterPro" id="IPR005712">
    <property type="entry name" value="Ribosomal_uS5_bac-type"/>
</dbReference>
<dbReference type="InterPro" id="IPR005324">
    <property type="entry name" value="Ribosomal_uS5_C"/>
</dbReference>
<dbReference type="InterPro" id="IPR013810">
    <property type="entry name" value="Ribosomal_uS5_N"/>
</dbReference>
<dbReference type="InterPro" id="IPR018192">
    <property type="entry name" value="Ribosomal_uS5_N_CS"/>
</dbReference>
<dbReference type="InterPro" id="IPR014721">
    <property type="entry name" value="Ribsml_uS5_D2-typ_fold_subgr"/>
</dbReference>
<dbReference type="NCBIfam" id="TIGR01021">
    <property type="entry name" value="rpsE_bact"/>
    <property type="match status" value="1"/>
</dbReference>
<dbReference type="PANTHER" id="PTHR48277">
    <property type="entry name" value="MITOCHONDRIAL RIBOSOMAL PROTEIN S5"/>
    <property type="match status" value="1"/>
</dbReference>
<dbReference type="PANTHER" id="PTHR48277:SF1">
    <property type="entry name" value="MITOCHONDRIAL RIBOSOMAL PROTEIN S5"/>
    <property type="match status" value="1"/>
</dbReference>
<dbReference type="Pfam" id="PF00333">
    <property type="entry name" value="Ribosomal_S5"/>
    <property type="match status" value="1"/>
</dbReference>
<dbReference type="Pfam" id="PF03719">
    <property type="entry name" value="Ribosomal_S5_C"/>
    <property type="match status" value="1"/>
</dbReference>
<dbReference type="SUPFAM" id="SSF54768">
    <property type="entry name" value="dsRNA-binding domain-like"/>
    <property type="match status" value="1"/>
</dbReference>
<dbReference type="SUPFAM" id="SSF54211">
    <property type="entry name" value="Ribosomal protein S5 domain 2-like"/>
    <property type="match status" value="1"/>
</dbReference>
<dbReference type="PROSITE" id="PS00585">
    <property type="entry name" value="RIBOSOMAL_S5"/>
    <property type="match status" value="1"/>
</dbReference>
<dbReference type="PROSITE" id="PS50881">
    <property type="entry name" value="S5_DSRBD"/>
    <property type="match status" value="1"/>
</dbReference>